<evidence type="ECO:0000255" key="1">
    <source>
        <dbReference type="HAMAP-Rule" id="MF_00539"/>
    </source>
</evidence>
<evidence type="ECO:0000256" key="2">
    <source>
        <dbReference type="SAM" id="MobiDB-lite"/>
    </source>
</evidence>
<evidence type="ECO:0000305" key="3"/>
<proteinExistence type="inferred from homology"/>
<sequence>MAHKKAGGSTRNGRDSEAKRLGVKRFGGESVLAGSIIVRQRGTKFHAGANVGCGRDHTLFAKADGKVKFEVKGPKNRKFISIEAE</sequence>
<keyword id="KW-1185">Reference proteome</keyword>
<keyword id="KW-0687">Ribonucleoprotein</keyword>
<keyword id="KW-0689">Ribosomal protein</keyword>
<feature type="chain" id="PRO_1000017610" description="Large ribosomal subunit protein bL27">
    <location>
        <begin position="1"/>
        <end position="85"/>
    </location>
</feature>
<feature type="region of interest" description="Disordered" evidence="2">
    <location>
        <begin position="1"/>
        <end position="20"/>
    </location>
</feature>
<protein>
    <recommendedName>
        <fullName evidence="1">Large ribosomal subunit protein bL27</fullName>
    </recommendedName>
    <alternativeName>
        <fullName evidence="3">50S ribosomal protein L27</fullName>
    </alternativeName>
</protein>
<dbReference type="EMBL" id="CP000038">
    <property type="protein sequence ID" value="AAZ89906.1"/>
    <property type="molecule type" value="Genomic_DNA"/>
</dbReference>
<dbReference type="RefSeq" id="WP_000940595.1">
    <property type="nucleotide sequence ID" value="NC_007384.1"/>
</dbReference>
<dbReference type="SMR" id="Q3YX56"/>
<dbReference type="GeneID" id="93778796"/>
<dbReference type="KEGG" id="ssn:SSON_3333"/>
<dbReference type="HOGENOM" id="CLU_095424_4_1_6"/>
<dbReference type="Proteomes" id="UP000002529">
    <property type="component" value="Chromosome"/>
</dbReference>
<dbReference type="GO" id="GO:0022625">
    <property type="term" value="C:cytosolic large ribosomal subunit"/>
    <property type="evidence" value="ECO:0007669"/>
    <property type="project" value="TreeGrafter"/>
</dbReference>
<dbReference type="GO" id="GO:0003735">
    <property type="term" value="F:structural constituent of ribosome"/>
    <property type="evidence" value="ECO:0007669"/>
    <property type="project" value="InterPro"/>
</dbReference>
<dbReference type="GO" id="GO:0006412">
    <property type="term" value="P:translation"/>
    <property type="evidence" value="ECO:0007669"/>
    <property type="project" value="UniProtKB-UniRule"/>
</dbReference>
<dbReference type="FunFam" id="2.40.50.100:FF:000001">
    <property type="entry name" value="50S ribosomal protein L27"/>
    <property type="match status" value="1"/>
</dbReference>
<dbReference type="Gene3D" id="2.40.50.100">
    <property type="match status" value="1"/>
</dbReference>
<dbReference type="HAMAP" id="MF_00539">
    <property type="entry name" value="Ribosomal_bL27"/>
    <property type="match status" value="1"/>
</dbReference>
<dbReference type="InterPro" id="IPR001684">
    <property type="entry name" value="Ribosomal_bL27"/>
</dbReference>
<dbReference type="InterPro" id="IPR018261">
    <property type="entry name" value="Ribosomal_bL27_CS"/>
</dbReference>
<dbReference type="NCBIfam" id="TIGR00062">
    <property type="entry name" value="L27"/>
    <property type="match status" value="1"/>
</dbReference>
<dbReference type="PANTHER" id="PTHR15893:SF0">
    <property type="entry name" value="LARGE RIBOSOMAL SUBUNIT PROTEIN BL27M"/>
    <property type="match status" value="1"/>
</dbReference>
<dbReference type="PANTHER" id="PTHR15893">
    <property type="entry name" value="RIBOSOMAL PROTEIN L27"/>
    <property type="match status" value="1"/>
</dbReference>
<dbReference type="Pfam" id="PF01016">
    <property type="entry name" value="Ribosomal_L27"/>
    <property type="match status" value="1"/>
</dbReference>
<dbReference type="PRINTS" id="PR00063">
    <property type="entry name" value="RIBOSOMALL27"/>
</dbReference>
<dbReference type="SUPFAM" id="SSF110324">
    <property type="entry name" value="Ribosomal L27 protein-like"/>
    <property type="match status" value="1"/>
</dbReference>
<dbReference type="PROSITE" id="PS00831">
    <property type="entry name" value="RIBOSOMAL_L27"/>
    <property type="match status" value="1"/>
</dbReference>
<organism>
    <name type="scientific">Shigella sonnei (strain Ss046)</name>
    <dbReference type="NCBI Taxonomy" id="300269"/>
    <lineage>
        <taxon>Bacteria</taxon>
        <taxon>Pseudomonadati</taxon>
        <taxon>Pseudomonadota</taxon>
        <taxon>Gammaproteobacteria</taxon>
        <taxon>Enterobacterales</taxon>
        <taxon>Enterobacteriaceae</taxon>
        <taxon>Shigella</taxon>
    </lineage>
</organism>
<comment type="similarity">
    <text evidence="1">Belongs to the bacterial ribosomal protein bL27 family.</text>
</comment>
<accession>Q3YX56</accession>
<name>RL27_SHISS</name>
<gene>
    <name evidence="1" type="primary">rpmA</name>
    <name type="ordered locus">SSON_3333</name>
</gene>
<reference key="1">
    <citation type="journal article" date="2005" name="Nucleic Acids Res.">
        <title>Genome dynamics and diversity of Shigella species, the etiologic agents of bacillary dysentery.</title>
        <authorList>
            <person name="Yang F."/>
            <person name="Yang J."/>
            <person name="Zhang X."/>
            <person name="Chen L."/>
            <person name="Jiang Y."/>
            <person name="Yan Y."/>
            <person name="Tang X."/>
            <person name="Wang J."/>
            <person name="Xiong Z."/>
            <person name="Dong J."/>
            <person name="Xue Y."/>
            <person name="Zhu Y."/>
            <person name="Xu X."/>
            <person name="Sun L."/>
            <person name="Chen S."/>
            <person name="Nie H."/>
            <person name="Peng J."/>
            <person name="Xu J."/>
            <person name="Wang Y."/>
            <person name="Yuan Z."/>
            <person name="Wen Y."/>
            <person name="Yao Z."/>
            <person name="Shen Y."/>
            <person name="Qiang B."/>
            <person name="Hou Y."/>
            <person name="Yu J."/>
            <person name="Jin Q."/>
        </authorList>
    </citation>
    <scope>NUCLEOTIDE SEQUENCE [LARGE SCALE GENOMIC DNA]</scope>
    <source>
        <strain>Ss046</strain>
    </source>
</reference>